<geneLocation type="mitochondrion"/>
<organism>
    <name type="scientific">Asterias forbesi</name>
    <name type="common">Forbes' starfish</name>
    <dbReference type="NCBI Taxonomy" id="7603"/>
    <lineage>
        <taxon>Eukaryota</taxon>
        <taxon>Metazoa</taxon>
        <taxon>Echinodermata</taxon>
        <taxon>Eleutherozoa</taxon>
        <taxon>Asterozoa</taxon>
        <taxon>Asteroidea</taxon>
        <taxon>Forcipulatacea</taxon>
        <taxon>Forcipulatida</taxon>
        <taxon>Asteriidae</taxon>
        <taxon>Asterias</taxon>
    </lineage>
</organism>
<proteinExistence type="inferred from homology"/>
<reference key="1">
    <citation type="journal article" date="1989" name="Curr. Genet.">
        <title>Conserved tRNA gene cluster in starfish mitochondrial DNA.</title>
        <authorList>
            <person name="Jacobs H.T."/>
            <person name="Asakawa S."/>
            <person name="Araki T."/>
            <person name="Miura K."/>
            <person name="Smith M.J."/>
            <person name="Watanabe K."/>
        </authorList>
    </citation>
    <scope>NUCLEOTIDE SEQUENCE [GENOMIC DNA]</scope>
</reference>
<accession>P23649</accession>
<name>NU1M_ASTFO</name>
<protein>
    <recommendedName>
        <fullName>NADH-ubiquinone oxidoreductase chain 1</fullName>
        <ecNumber>7.1.1.2</ecNumber>
    </recommendedName>
    <alternativeName>
        <fullName>NADH dehydrogenase subunit 1</fullName>
    </alternativeName>
</protein>
<sequence length="127" mass="13813">MLLLFLNSVGFIVPVLLAVALLTLIERKMLGYMHVRKGPNNVGPYGLLQPIADGFKLLIKETLKPSNASPYLFYSSPALFLFLAILLWSIIPVGESTLNFNLSLVLILGLSSLSVYSLLGSGWSSNS</sequence>
<keyword id="KW-0249">Electron transport</keyword>
<keyword id="KW-0472">Membrane</keyword>
<keyword id="KW-0496">Mitochondrion</keyword>
<keyword id="KW-0999">Mitochondrion inner membrane</keyword>
<keyword id="KW-0520">NAD</keyword>
<keyword id="KW-0679">Respiratory chain</keyword>
<keyword id="KW-1278">Translocase</keyword>
<keyword id="KW-0812">Transmembrane</keyword>
<keyword id="KW-1133">Transmembrane helix</keyword>
<keyword id="KW-0813">Transport</keyword>
<keyword id="KW-0830">Ubiquinone</keyword>
<dbReference type="EC" id="7.1.1.2"/>
<dbReference type="EMBL" id="X16885">
    <property type="protein sequence ID" value="CAA34765.1"/>
    <property type="status" value="ALT_INIT"/>
    <property type="molecule type" value="Genomic_DNA"/>
</dbReference>
<dbReference type="PIR" id="S08468">
    <property type="entry name" value="S08468"/>
</dbReference>
<dbReference type="SMR" id="P23649"/>
<dbReference type="GO" id="GO:0005743">
    <property type="term" value="C:mitochondrial inner membrane"/>
    <property type="evidence" value="ECO:0007669"/>
    <property type="project" value="UniProtKB-SubCell"/>
</dbReference>
<dbReference type="GO" id="GO:0008137">
    <property type="term" value="F:NADH dehydrogenase (ubiquinone) activity"/>
    <property type="evidence" value="ECO:0007669"/>
    <property type="project" value="UniProtKB-EC"/>
</dbReference>
<dbReference type="GO" id="GO:0009060">
    <property type="term" value="P:aerobic respiration"/>
    <property type="evidence" value="ECO:0007669"/>
    <property type="project" value="TreeGrafter"/>
</dbReference>
<dbReference type="InterPro" id="IPR001694">
    <property type="entry name" value="NADH_UbQ_OxRdtase_su1/FPO"/>
</dbReference>
<dbReference type="InterPro" id="IPR018086">
    <property type="entry name" value="NADH_UbQ_OxRdtase_su1_CS"/>
</dbReference>
<dbReference type="PANTHER" id="PTHR11432">
    <property type="entry name" value="NADH DEHYDROGENASE SUBUNIT 1"/>
    <property type="match status" value="1"/>
</dbReference>
<dbReference type="PANTHER" id="PTHR11432:SF3">
    <property type="entry name" value="NADH-UBIQUINONE OXIDOREDUCTASE CHAIN 1"/>
    <property type="match status" value="1"/>
</dbReference>
<dbReference type="Pfam" id="PF00146">
    <property type="entry name" value="NADHdh"/>
    <property type="match status" value="1"/>
</dbReference>
<dbReference type="PROSITE" id="PS00667">
    <property type="entry name" value="COMPLEX1_ND1_1"/>
    <property type="match status" value="1"/>
</dbReference>
<feature type="chain" id="PRO_0000117349" description="NADH-ubiquinone oxidoreductase chain 1">
    <location>
        <begin position="1"/>
        <end position="127" status="greater than"/>
    </location>
</feature>
<feature type="transmembrane region" description="Helical" evidence="2">
    <location>
        <begin position="2"/>
        <end position="22"/>
    </location>
</feature>
<feature type="transmembrane region" description="Helical" evidence="2">
    <location>
        <begin position="71"/>
        <end position="91"/>
    </location>
</feature>
<feature type="transmembrane region" description="Helical" evidence="2">
    <location>
        <begin position="100"/>
        <end position="120"/>
    </location>
</feature>
<feature type="non-terminal residue">
    <location>
        <position position="127"/>
    </location>
</feature>
<comment type="function">
    <text evidence="1">Core subunit of the mitochondrial membrane respiratory chain NADH dehydrogenase (Complex I) that is believed to belong to the minimal assembly required for catalysis. Complex I functions in the transfer of electrons from NADH to the respiratory chain. The immediate electron acceptor for the enzyme is believed to be ubiquinone (By similarity).</text>
</comment>
<comment type="catalytic activity">
    <reaction>
        <text>a ubiquinone + NADH + 5 H(+)(in) = a ubiquinol + NAD(+) + 4 H(+)(out)</text>
        <dbReference type="Rhea" id="RHEA:29091"/>
        <dbReference type="Rhea" id="RHEA-COMP:9565"/>
        <dbReference type="Rhea" id="RHEA-COMP:9566"/>
        <dbReference type="ChEBI" id="CHEBI:15378"/>
        <dbReference type="ChEBI" id="CHEBI:16389"/>
        <dbReference type="ChEBI" id="CHEBI:17976"/>
        <dbReference type="ChEBI" id="CHEBI:57540"/>
        <dbReference type="ChEBI" id="CHEBI:57945"/>
        <dbReference type="EC" id="7.1.1.2"/>
    </reaction>
</comment>
<comment type="subcellular location">
    <subcellularLocation>
        <location evidence="1">Mitochondrion inner membrane</location>
        <topology evidence="1">Multi-pass membrane protein</topology>
    </subcellularLocation>
</comment>
<comment type="similarity">
    <text evidence="3">Belongs to the complex I subunit 1 family.</text>
</comment>
<comment type="sequence caution" evidence="3">
    <conflict type="erroneous initiation">
        <sequence resource="EMBL-CDS" id="CAA34765"/>
    </conflict>
</comment>
<evidence type="ECO:0000250" key="1"/>
<evidence type="ECO:0000255" key="2"/>
<evidence type="ECO:0000305" key="3"/>
<gene>
    <name type="primary">ND1</name>
</gene>